<reference key="1">
    <citation type="journal article" date="1995" name="J. Gen. Virol.">
        <title>Identification and characterization of the frog virus 3 DNA methyltransferase gene.</title>
        <authorList>
            <person name="Kaur K."/>
            <person name="Rohozinski J."/>
            <person name="Goorha R."/>
        </authorList>
    </citation>
    <scope>NUCLEOTIDE SEQUENCE [GENOMIC DNA]</scope>
    <scope>PROBABLE FUNCTION</scope>
    <scope>SUBUNIT</scope>
    <scope>DEVELOPMENTAL STAGE</scope>
    <scope>MUTAGENESIS OF CYS-17</scope>
</reference>
<reference key="2">
    <citation type="journal article" date="2004" name="Virology">
        <title>Comparative genomic analyses of frog virus 3, type species of the genus Ranavirus (family Iridoviridae).</title>
        <authorList>
            <person name="Tan W.G."/>
            <person name="Barkman T.J."/>
            <person name="Gregory Chinchar V."/>
            <person name="Essani K."/>
        </authorList>
    </citation>
    <scope>NUCLEOTIDE SEQUENCE [LARGE SCALE GENOMIC DNA]</scope>
</reference>
<reference key="3">
    <citation type="journal article" date="1980" name="Virology">
        <title>Frog virus 3 DNA is heavily methylated at CpG sequences.</title>
        <authorList>
            <person name="Willis D.B."/>
            <person name="Granoff A."/>
        </authorList>
    </citation>
    <scope>DNA METHYLATION</scope>
</reference>
<reference key="4">
    <citation type="journal article" date="1987" name="Virology">
        <title>Mutation in a DNA-binding protein reveals an association between DNA-methyltransferase activity and a 26,000-Da polypeptide in frog virus 3-infected cells.</title>
        <authorList>
            <person name="Essani K."/>
            <person name="Goorha R."/>
            <person name="Granoff A."/>
        </authorList>
    </citation>
    <scope>DNA METHYLATION</scope>
    <scope>PROBABLE FUNCTION</scope>
</reference>
<reference key="5">
    <citation type="journal article" date="2003" name="Nucleic Acids Res.">
        <title>A nomenclature for restriction enzymes, DNA methyltransferases, homing endonucleases and their genes.</title>
        <authorList>
            <person name="Roberts R.J."/>
            <person name="Belfort M."/>
            <person name="Bestor T."/>
            <person name="Bhagwat A.S."/>
            <person name="Bickle T.A."/>
            <person name="Bitinaite J."/>
            <person name="Blumenthal R.M."/>
            <person name="Degtyarev S.K."/>
            <person name="Dryden D.T."/>
            <person name="Dybvig K."/>
            <person name="Firman K."/>
            <person name="Gromova E.S."/>
            <person name="Gumport R.I."/>
            <person name="Halford S.E."/>
            <person name="Hattman S."/>
            <person name="Heitman J."/>
            <person name="Hornby D.P."/>
            <person name="Janulaitis A."/>
            <person name="Jeltsch A."/>
            <person name="Josephsen J."/>
            <person name="Kiss A."/>
            <person name="Klaenhammer T.R."/>
            <person name="Kobayashi I."/>
            <person name="Kong H."/>
            <person name="Krueger D.H."/>
            <person name="Lacks S."/>
            <person name="Marinus M.G."/>
            <person name="Miyahara M."/>
            <person name="Morgan R.D."/>
            <person name="Murray N.E."/>
            <person name="Nagaraja V."/>
            <person name="Piekarowicz A."/>
            <person name="Pingoud A."/>
            <person name="Raleigh E."/>
            <person name="Rao D.N."/>
            <person name="Reich N."/>
            <person name="Repin V.E."/>
            <person name="Selker E.U."/>
            <person name="Shaw P.C."/>
            <person name="Stein D.C."/>
            <person name="Stoddard B.L."/>
            <person name="Szybalski W."/>
            <person name="Trautner T.A."/>
            <person name="Van Etten J.L."/>
            <person name="Vitor J.M."/>
            <person name="Wilson G.G."/>
            <person name="Xu S.Y."/>
        </authorList>
    </citation>
    <scope>NOMENCLATURE</scope>
</reference>
<organismHost>
    <name type="scientific">Dryophytes versicolor</name>
    <name type="common">chameleon treefrog</name>
    <dbReference type="NCBI Taxonomy" id="30343"/>
</organismHost>
<organismHost>
    <name type="scientific">Lithobates pipiens</name>
    <name type="common">Northern leopard frog</name>
    <name type="synonym">Rana pipiens</name>
    <dbReference type="NCBI Taxonomy" id="8404"/>
</organismHost>
<organismHost>
    <name type="scientific">Lithobates sylvaticus</name>
    <name type="common">Wood frog</name>
    <name type="synonym">Rana sylvatica</name>
    <dbReference type="NCBI Taxonomy" id="45438"/>
</organismHost>
<organismHost>
    <name type="scientific">Notophthalmus viridescens</name>
    <name type="common">Eastern newt</name>
    <name type="synonym">Triturus viridescens</name>
    <dbReference type="NCBI Taxonomy" id="8316"/>
</organismHost>
<sequence>MRILDLFSGTHSVPKACAQREGWSCVTVDLADSDYNVDVLEWDYTKDLKPREFDVVWASPPCRYFSKLRESNIGRGGMTKKSVKEDLETKGLPLLRRAMEIIAYLQPKKFIVENPDTGRMKEYITEWPHYVVDYCAYSDWGYRKRTRLWTDIEGFVPKTCAGKESCPNMERNPSSGRWRHVLATDAGGRGRKGTTRRLRYRVPPAIIVELLDLC</sequence>
<accession>Q67472</accession>
<protein>
    <recommendedName>
        <fullName>Probable DNA (cytosine-5)-methyltransferase</fullName>
        <ecNumber>2.1.1.37</ecNumber>
    </recommendedName>
    <alternativeName>
        <fullName evidence="6">Orphan methyltransferase M.Fvi3IP</fullName>
        <shortName evidence="6">M.Fvi3IP</shortName>
    </alternativeName>
</protein>
<dbReference type="EC" id="2.1.1.37"/>
<dbReference type="EMBL" id="U15575">
    <property type="protein sequence ID" value="AAA86959.1"/>
    <property type="molecule type" value="Genomic_DNA"/>
</dbReference>
<dbReference type="EMBL" id="AY548484">
    <property type="protein sequence ID" value="AAT09743.1"/>
    <property type="molecule type" value="Genomic_DNA"/>
</dbReference>
<dbReference type="RefSeq" id="YP_031662.1">
    <property type="nucleotide sequence ID" value="NC_005946.1"/>
</dbReference>
<dbReference type="SMR" id="Q67472"/>
<dbReference type="REBASE" id="2843">
    <property type="entry name" value="M.Fvi3IP"/>
</dbReference>
<dbReference type="KEGG" id="vg:2947802"/>
<dbReference type="Proteomes" id="UP000008770">
    <property type="component" value="Segment"/>
</dbReference>
<dbReference type="GO" id="GO:0003886">
    <property type="term" value="F:DNA (cytosine-5-)-methyltransferase activity"/>
    <property type="evidence" value="ECO:0007669"/>
    <property type="project" value="UniProtKB-EC"/>
</dbReference>
<dbReference type="GO" id="GO:0003677">
    <property type="term" value="F:DNA binding"/>
    <property type="evidence" value="ECO:0007669"/>
    <property type="project" value="UniProtKB-KW"/>
</dbReference>
<dbReference type="GO" id="GO:0006325">
    <property type="term" value="P:chromatin organization"/>
    <property type="evidence" value="ECO:0007669"/>
    <property type="project" value="UniProtKB-KW"/>
</dbReference>
<dbReference type="GO" id="GO:0032259">
    <property type="term" value="P:methylation"/>
    <property type="evidence" value="ECO:0007669"/>
    <property type="project" value="UniProtKB-KW"/>
</dbReference>
<dbReference type="Gene3D" id="3.40.50.150">
    <property type="entry name" value="Vaccinia Virus protein VP39"/>
    <property type="match status" value="1"/>
</dbReference>
<dbReference type="InterPro" id="IPR018117">
    <property type="entry name" value="C5_DNA_meth_AS"/>
</dbReference>
<dbReference type="InterPro" id="IPR029063">
    <property type="entry name" value="SAM-dependent_MTases_sf"/>
</dbReference>
<dbReference type="SUPFAM" id="SSF53335">
    <property type="entry name" value="S-adenosyl-L-methionine-dependent methyltransferases"/>
    <property type="match status" value="1"/>
</dbReference>
<dbReference type="PROSITE" id="PS00094">
    <property type="entry name" value="C5_MTASE_1"/>
    <property type="match status" value="1"/>
</dbReference>
<organism>
    <name type="scientific">Frog virus 3 (isolate Goorha)</name>
    <name type="common">FV-3</name>
    <dbReference type="NCBI Taxonomy" id="654924"/>
    <lineage>
        <taxon>Viruses</taxon>
        <taxon>Varidnaviria</taxon>
        <taxon>Bamfordvirae</taxon>
        <taxon>Nucleocytoviricota</taxon>
        <taxon>Megaviricetes</taxon>
        <taxon>Pimascovirales</taxon>
        <taxon>Iridoviridae</taxon>
        <taxon>Alphairidovirinae</taxon>
        <taxon>Ranavirus</taxon>
        <taxon>Frog virus 3</taxon>
    </lineage>
</organism>
<keyword id="KW-0156">Chromatin regulator</keyword>
<keyword id="KW-0238">DNA-binding</keyword>
<keyword id="KW-0489">Methyltransferase</keyword>
<keyword id="KW-1185">Reference proteome</keyword>
<keyword id="KW-0949">S-adenosyl-L-methionine</keyword>
<keyword id="KW-0808">Transferase</keyword>
<proteinExistence type="evidence at protein level"/>
<name>DNMT_FRG3G</name>
<feature type="chain" id="PRO_0000410586" description="Probable DNA (cytosine-5)-methyltransferase">
    <location>
        <begin position="1"/>
        <end position="214"/>
    </location>
</feature>
<feature type="active site" evidence="1 2">
    <location>
        <position position="62"/>
    </location>
</feature>
<feature type="mutagenesis site" description="Loss of methyltransferase activity." evidence="5">
    <original>C</original>
    <variation>W</variation>
    <location>
        <position position="17"/>
    </location>
</feature>
<comment type="function">
    <text evidence="7">This is probably the methylase that recognizes and modifies 5'-CpG-3'.</text>
</comment>
<comment type="catalytic activity">
    <reaction evidence="2">
        <text>a 2'-deoxycytidine in DNA + S-adenosyl-L-methionine = a 5-methyl-2'-deoxycytidine in DNA + S-adenosyl-L-homocysteine + H(+)</text>
        <dbReference type="Rhea" id="RHEA:13681"/>
        <dbReference type="Rhea" id="RHEA-COMP:11369"/>
        <dbReference type="Rhea" id="RHEA-COMP:11370"/>
        <dbReference type="ChEBI" id="CHEBI:15378"/>
        <dbReference type="ChEBI" id="CHEBI:57856"/>
        <dbReference type="ChEBI" id="CHEBI:59789"/>
        <dbReference type="ChEBI" id="CHEBI:85452"/>
        <dbReference type="ChEBI" id="CHEBI:85454"/>
        <dbReference type="EC" id="2.1.1.37"/>
    </reaction>
</comment>
<comment type="subunit">
    <text evidence="7">Probably requires another subunit for function.</text>
</comment>
<comment type="developmental stage">
    <text evidence="5">Transcribed in the delayed early phase of replication.</text>
</comment>
<comment type="miscellaneous">
    <text evidence="3 4">About 20% of the cytosine bases in the genome are methylated on 5'-CpG-3' sequences.</text>
</comment>
<comment type="similarity">
    <text evidence="1">Belongs to the class I-like SAM-binding methyltransferase superfamily. C5-methyltransferase family.</text>
</comment>
<evidence type="ECO:0000255" key="1">
    <source>
        <dbReference type="PROSITE-ProRule" id="PRU01016"/>
    </source>
</evidence>
<evidence type="ECO:0000255" key="2">
    <source>
        <dbReference type="PROSITE-ProRule" id="PRU10018"/>
    </source>
</evidence>
<evidence type="ECO:0000269" key="3">
    <source>
    </source>
</evidence>
<evidence type="ECO:0000269" key="4">
    <source>
    </source>
</evidence>
<evidence type="ECO:0000269" key="5">
    <source>
    </source>
</evidence>
<evidence type="ECO:0000303" key="6">
    <source>
    </source>
</evidence>
<evidence type="ECO:0000305" key="7">
    <source>
    </source>
</evidence>
<gene>
    <name type="ORF">FV3-083R</name>
</gene>